<comment type="function">
    <text evidence="1">Converts cobyric acid to cobinamide by the addition of aminopropanol on the F carboxylic group.</text>
</comment>
<comment type="pathway">
    <text evidence="1">Cofactor biosynthesis; adenosylcobalamin biosynthesis.</text>
</comment>
<comment type="subcellular location">
    <subcellularLocation>
        <location evidence="1">Cell membrane</location>
        <topology evidence="1">Multi-pass membrane protein</topology>
    </subcellularLocation>
</comment>
<comment type="similarity">
    <text evidence="1">Belongs to the CobD/CbiB family.</text>
</comment>
<proteinExistence type="inferred from homology"/>
<name>COBD_STRSV</name>
<protein>
    <recommendedName>
        <fullName evidence="1">Cobalamin biosynthesis protein CobD</fullName>
    </recommendedName>
</protein>
<sequence>MTLIAIFLAVLLDWLIGDPYSWPHPVKWMGSYIYLCMRLQEKKQFSPYLFGFFLWLTTVGLALGVSCGLLWLAGLAHPVLYWLVWIYLAYASLAAKSLAFEAQKVYHTLKFGTLEEARKQVGMIVGRETSQLTPEEISKATIETVAENTSDGVIGPLLCLFLGGPILAMTYKAINTLDSMVGYKTEKYRKIGLISAKMDDLANLIPARLTWLFLILSSQILLLDVKGALRIGWRDRYQHASPNSAFSEAVVAGALGIQLGGPHVYHGELIEKPTIGEDSRPVEADDIQTAISLLYTSTMTGLILFTLFYLVMQAYF</sequence>
<keyword id="KW-1003">Cell membrane</keyword>
<keyword id="KW-0169">Cobalamin biosynthesis</keyword>
<keyword id="KW-0472">Membrane</keyword>
<keyword id="KW-1185">Reference proteome</keyword>
<keyword id="KW-0812">Transmembrane</keyword>
<keyword id="KW-1133">Transmembrane helix</keyword>
<evidence type="ECO:0000255" key="1">
    <source>
        <dbReference type="HAMAP-Rule" id="MF_00024"/>
    </source>
</evidence>
<feature type="chain" id="PRO_1000057221" description="Cobalamin biosynthesis protein CobD">
    <location>
        <begin position="1"/>
        <end position="316"/>
    </location>
</feature>
<feature type="transmembrane region" description="Helical" evidence="1">
    <location>
        <begin position="45"/>
        <end position="65"/>
    </location>
</feature>
<feature type="transmembrane region" description="Helical" evidence="1">
    <location>
        <begin position="78"/>
        <end position="100"/>
    </location>
</feature>
<feature type="transmembrane region" description="Helical" evidence="1">
    <location>
        <begin position="151"/>
        <end position="171"/>
    </location>
</feature>
<feature type="transmembrane region" description="Helical" evidence="1">
    <location>
        <begin position="209"/>
        <end position="229"/>
    </location>
</feature>
<feature type="transmembrane region" description="Helical" evidence="1">
    <location>
        <begin position="291"/>
        <end position="311"/>
    </location>
</feature>
<accession>A3CL57</accession>
<dbReference type="EMBL" id="CP000387">
    <property type="protein sequence ID" value="ABN43912.1"/>
    <property type="molecule type" value="Genomic_DNA"/>
</dbReference>
<dbReference type="RefSeq" id="YP_001034462.1">
    <property type="nucleotide sequence ID" value="NC_009009.1"/>
</dbReference>
<dbReference type="STRING" id="388919.SSA_0464"/>
<dbReference type="KEGG" id="ssa:SSA_0464"/>
<dbReference type="PATRIC" id="fig|388919.9.peg.448"/>
<dbReference type="eggNOG" id="COG1270">
    <property type="taxonomic scope" value="Bacteria"/>
</dbReference>
<dbReference type="HOGENOM" id="CLU_054212_0_0_9"/>
<dbReference type="OrthoDB" id="9811967at2"/>
<dbReference type="UniPathway" id="UPA00148"/>
<dbReference type="Proteomes" id="UP000002148">
    <property type="component" value="Chromosome"/>
</dbReference>
<dbReference type="GO" id="GO:0005886">
    <property type="term" value="C:plasma membrane"/>
    <property type="evidence" value="ECO:0007669"/>
    <property type="project" value="UniProtKB-SubCell"/>
</dbReference>
<dbReference type="GO" id="GO:0015420">
    <property type="term" value="F:ABC-type vitamin B12 transporter activity"/>
    <property type="evidence" value="ECO:0007669"/>
    <property type="project" value="UniProtKB-UniRule"/>
</dbReference>
<dbReference type="GO" id="GO:0048472">
    <property type="term" value="F:threonine-phosphate decarboxylase activity"/>
    <property type="evidence" value="ECO:0007669"/>
    <property type="project" value="InterPro"/>
</dbReference>
<dbReference type="GO" id="GO:0009236">
    <property type="term" value="P:cobalamin biosynthetic process"/>
    <property type="evidence" value="ECO:0007669"/>
    <property type="project" value="UniProtKB-UniRule"/>
</dbReference>
<dbReference type="HAMAP" id="MF_00024">
    <property type="entry name" value="CobD_CbiB"/>
    <property type="match status" value="1"/>
</dbReference>
<dbReference type="InterPro" id="IPR004485">
    <property type="entry name" value="Cobalamin_biosynth_CobD/CbiB"/>
</dbReference>
<dbReference type="NCBIfam" id="TIGR00380">
    <property type="entry name" value="cobal_cbiB"/>
    <property type="match status" value="1"/>
</dbReference>
<dbReference type="PANTHER" id="PTHR34308">
    <property type="entry name" value="COBALAMIN BIOSYNTHESIS PROTEIN CBIB"/>
    <property type="match status" value="1"/>
</dbReference>
<dbReference type="PANTHER" id="PTHR34308:SF1">
    <property type="entry name" value="COBALAMIN BIOSYNTHESIS PROTEIN CBIB"/>
    <property type="match status" value="1"/>
</dbReference>
<dbReference type="Pfam" id="PF03186">
    <property type="entry name" value="CobD_Cbib"/>
    <property type="match status" value="1"/>
</dbReference>
<reference key="1">
    <citation type="journal article" date="2007" name="J. Bacteriol.">
        <title>Genome of the opportunistic pathogen Streptococcus sanguinis.</title>
        <authorList>
            <person name="Xu P."/>
            <person name="Alves J.M."/>
            <person name="Kitten T."/>
            <person name="Brown A."/>
            <person name="Chen Z."/>
            <person name="Ozaki L.S."/>
            <person name="Manque P."/>
            <person name="Ge X."/>
            <person name="Serrano M.G."/>
            <person name="Puiu D."/>
            <person name="Hendricks S."/>
            <person name="Wang Y."/>
            <person name="Chaplin M.D."/>
            <person name="Akan D."/>
            <person name="Paik S."/>
            <person name="Peterson D.L."/>
            <person name="Macrina F.L."/>
            <person name="Buck G.A."/>
        </authorList>
    </citation>
    <scope>NUCLEOTIDE SEQUENCE [LARGE SCALE GENOMIC DNA]</scope>
    <source>
        <strain>SK36</strain>
    </source>
</reference>
<gene>
    <name evidence="1" type="primary">cobD</name>
    <name type="ordered locus">SSA_0464</name>
</gene>
<organism>
    <name type="scientific">Streptococcus sanguinis (strain SK36)</name>
    <dbReference type="NCBI Taxonomy" id="388919"/>
    <lineage>
        <taxon>Bacteria</taxon>
        <taxon>Bacillati</taxon>
        <taxon>Bacillota</taxon>
        <taxon>Bacilli</taxon>
        <taxon>Lactobacillales</taxon>
        <taxon>Streptococcaceae</taxon>
        <taxon>Streptococcus</taxon>
    </lineage>
</organism>